<feature type="chain" id="PRO_0000140958" description="Thymidylate synthase">
    <location>
        <begin position="1"/>
        <end position="264"/>
    </location>
</feature>
<feature type="active site" description="Nucleophile" evidence="1">
    <location>
        <position position="146"/>
    </location>
</feature>
<feature type="binding site" description="in other chain" evidence="1">
    <location>
        <position position="21"/>
    </location>
    <ligand>
        <name>dUMP</name>
        <dbReference type="ChEBI" id="CHEBI:246422"/>
        <note>ligand shared between dimeric partners</note>
    </ligand>
</feature>
<feature type="binding site" evidence="1">
    <location>
        <position position="51"/>
    </location>
    <ligand>
        <name>(6R)-5,10-methylene-5,6,7,8-tetrahydrofolate</name>
        <dbReference type="ChEBI" id="CHEBI:15636"/>
    </ligand>
</feature>
<feature type="binding site" evidence="1">
    <location>
        <begin position="126"/>
        <end position="127"/>
    </location>
    <ligand>
        <name>dUMP</name>
        <dbReference type="ChEBI" id="CHEBI:246422"/>
        <note>ligand shared between dimeric partners</note>
    </ligand>
</feature>
<feature type="binding site" description="in other chain" evidence="1">
    <location>
        <begin position="166"/>
        <end position="169"/>
    </location>
    <ligand>
        <name>dUMP</name>
        <dbReference type="ChEBI" id="CHEBI:246422"/>
        <note>ligand shared between dimeric partners</note>
    </ligand>
</feature>
<feature type="binding site" evidence="1">
    <location>
        <position position="169"/>
    </location>
    <ligand>
        <name>(6R)-5,10-methylene-5,6,7,8-tetrahydrofolate</name>
        <dbReference type="ChEBI" id="CHEBI:15636"/>
    </ligand>
</feature>
<feature type="binding site" description="in other chain" evidence="1">
    <location>
        <position position="177"/>
    </location>
    <ligand>
        <name>dUMP</name>
        <dbReference type="ChEBI" id="CHEBI:246422"/>
        <note>ligand shared between dimeric partners</note>
    </ligand>
</feature>
<feature type="binding site" description="in other chain" evidence="1">
    <location>
        <begin position="207"/>
        <end position="209"/>
    </location>
    <ligand>
        <name>dUMP</name>
        <dbReference type="ChEBI" id="CHEBI:246422"/>
        <note>ligand shared between dimeric partners</note>
    </ligand>
</feature>
<feature type="binding site" evidence="1">
    <location>
        <position position="263"/>
    </location>
    <ligand>
        <name>(6R)-5,10-methylene-5,6,7,8-tetrahydrofolate</name>
        <dbReference type="ChEBI" id="CHEBI:15636"/>
    </ligand>
</feature>
<reference key="1">
    <citation type="journal article" date="2004" name="Proc. Natl. Acad. Sci. U.S.A.">
        <title>Genome sequence of the enterobacterial phytopathogen Erwinia carotovora subsp. atroseptica and characterization of virulence factors.</title>
        <authorList>
            <person name="Bell K.S."/>
            <person name="Sebaihia M."/>
            <person name="Pritchard L."/>
            <person name="Holden M.T.G."/>
            <person name="Hyman L.J."/>
            <person name="Holeva M.C."/>
            <person name="Thomson N.R."/>
            <person name="Bentley S.D."/>
            <person name="Churcher L.J.C."/>
            <person name="Mungall K."/>
            <person name="Atkin R."/>
            <person name="Bason N."/>
            <person name="Brooks K."/>
            <person name="Chillingworth T."/>
            <person name="Clark K."/>
            <person name="Doggett J."/>
            <person name="Fraser A."/>
            <person name="Hance Z."/>
            <person name="Hauser H."/>
            <person name="Jagels K."/>
            <person name="Moule S."/>
            <person name="Norbertczak H."/>
            <person name="Ormond D."/>
            <person name="Price C."/>
            <person name="Quail M.A."/>
            <person name="Sanders M."/>
            <person name="Walker D."/>
            <person name="Whitehead S."/>
            <person name="Salmond G.P.C."/>
            <person name="Birch P.R.J."/>
            <person name="Parkhill J."/>
            <person name="Toth I.K."/>
        </authorList>
    </citation>
    <scope>NUCLEOTIDE SEQUENCE [LARGE SCALE GENOMIC DNA]</scope>
    <source>
        <strain>SCRI 1043 / ATCC BAA-672</strain>
    </source>
</reference>
<dbReference type="EC" id="2.1.1.45" evidence="1"/>
<dbReference type="EMBL" id="BX950851">
    <property type="protein sequence ID" value="CAG73899.1"/>
    <property type="molecule type" value="Genomic_DNA"/>
</dbReference>
<dbReference type="RefSeq" id="WP_011092588.1">
    <property type="nucleotide sequence ID" value="NC_004547.2"/>
</dbReference>
<dbReference type="SMR" id="Q6D8I6"/>
<dbReference type="STRING" id="218491.ECA0988"/>
<dbReference type="GeneID" id="57207815"/>
<dbReference type="KEGG" id="eca:ECA0988"/>
<dbReference type="eggNOG" id="COG0207">
    <property type="taxonomic scope" value="Bacteria"/>
</dbReference>
<dbReference type="HOGENOM" id="CLU_021669_0_0_6"/>
<dbReference type="OrthoDB" id="9774633at2"/>
<dbReference type="UniPathway" id="UPA00575"/>
<dbReference type="Proteomes" id="UP000007966">
    <property type="component" value="Chromosome"/>
</dbReference>
<dbReference type="GO" id="GO:0005829">
    <property type="term" value="C:cytosol"/>
    <property type="evidence" value="ECO:0007669"/>
    <property type="project" value="TreeGrafter"/>
</dbReference>
<dbReference type="GO" id="GO:0004799">
    <property type="term" value="F:thymidylate synthase activity"/>
    <property type="evidence" value="ECO:0007669"/>
    <property type="project" value="UniProtKB-UniRule"/>
</dbReference>
<dbReference type="GO" id="GO:0006231">
    <property type="term" value="P:dTMP biosynthetic process"/>
    <property type="evidence" value="ECO:0007669"/>
    <property type="project" value="UniProtKB-UniRule"/>
</dbReference>
<dbReference type="GO" id="GO:0006235">
    <property type="term" value="P:dTTP biosynthetic process"/>
    <property type="evidence" value="ECO:0007669"/>
    <property type="project" value="UniProtKB-UniRule"/>
</dbReference>
<dbReference type="GO" id="GO:0032259">
    <property type="term" value="P:methylation"/>
    <property type="evidence" value="ECO:0007669"/>
    <property type="project" value="UniProtKB-KW"/>
</dbReference>
<dbReference type="CDD" id="cd00351">
    <property type="entry name" value="TS_Pyrimidine_HMase"/>
    <property type="match status" value="1"/>
</dbReference>
<dbReference type="FunFam" id="3.30.572.10:FF:000001">
    <property type="entry name" value="Thymidylate synthase"/>
    <property type="match status" value="1"/>
</dbReference>
<dbReference type="Gene3D" id="3.30.572.10">
    <property type="entry name" value="Thymidylate synthase/dCMP hydroxymethylase domain"/>
    <property type="match status" value="1"/>
</dbReference>
<dbReference type="HAMAP" id="MF_00008">
    <property type="entry name" value="Thymidy_synth_bact"/>
    <property type="match status" value="1"/>
</dbReference>
<dbReference type="InterPro" id="IPR045097">
    <property type="entry name" value="Thymidate_synth/dCMP_Mease"/>
</dbReference>
<dbReference type="InterPro" id="IPR023451">
    <property type="entry name" value="Thymidate_synth/dCMP_Mease_dom"/>
</dbReference>
<dbReference type="InterPro" id="IPR036926">
    <property type="entry name" value="Thymidate_synth/dCMP_Mease_sf"/>
</dbReference>
<dbReference type="InterPro" id="IPR000398">
    <property type="entry name" value="Thymidylate_synthase"/>
</dbReference>
<dbReference type="InterPro" id="IPR020940">
    <property type="entry name" value="Thymidylate_synthase_AS"/>
</dbReference>
<dbReference type="NCBIfam" id="NF002497">
    <property type="entry name" value="PRK01827.1-3"/>
    <property type="match status" value="1"/>
</dbReference>
<dbReference type="NCBIfam" id="NF002499">
    <property type="entry name" value="PRK01827.1-5"/>
    <property type="match status" value="1"/>
</dbReference>
<dbReference type="NCBIfam" id="TIGR03284">
    <property type="entry name" value="thym_sym"/>
    <property type="match status" value="2"/>
</dbReference>
<dbReference type="PANTHER" id="PTHR11548:SF9">
    <property type="entry name" value="THYMIDYLATE SYNTHASE"/>
    <property type="match status" value="1"/>
</dbReference>
<dbReference type="PANTHER" id="PTHR11548">
    <property type="entry name" value="THYMIDYLATE SYNTHASE 1"/>
    <property type="match status" value="1"/>
</dbReference>
<dbReference type="Pfam" id="PF00303">
    <property type="entry name" value="Thymidylat_synt"/>
    <property type="match status" value="1"/>
</dbReference>
<dbReference type="PRINTS" id="PR00108">
    <property type="entry name" value="THYMDSNTHASE"/>
</dbReference>
<dbReference type="SUPFAM" id="SSF55831">
    <property type="entry name" value="Thymidylate synthase/dCMP hydroxymethylase"/>
    <property type="match status" value="1"/>
</dbReference>
<dbReference type="PROSITE" id="PS00091">
    <property type="entry name" value="THYMIDYLATE_SYNTHASE"/>
    <property type="match status" value="1"/>
</dbReference>
<accession>Q6D8I6</accession>
<sequence length="264" mass="30361">MKQYLDLMKKVLEEGTPKADRTGTGTRSIFGHQMRFNLQDGFPLVTTKKCHLRSIIHELLWFLNGDTNVAYLNENKVSIWDEWADENGDLGPVYGKQWRSWGAADGRQIDQLKNVLTQLRQDPDSRRIIVSAWNVGELDKMALAPCHAFFQFYVADGKLSCQLYQRSCDIFLGLPFNIASYALLVHMVAQQCDLDVGDFVWTGGDTHLYNNHMEQTHLQLSREPRALPKLVIKRRPDTLFDYRFEDFEIEGYDPHPAIKAPVAI</sequence>
<keyword id="KW-0963">Cytoplasm</keyword>
<keyword id="KW-0489">Methyltransferase</keyword>
<keyword id="KW-0545">Nucleotide biosynthesis</keyword>
<keyword id="KW-1185">Reference proteome</keyword>
<keyword id="KW-0808">Transferase</keyword>
<evidence type="ECO:0000255" key="1">
    <source>
        <dbReference type="HAMAP-Rule" id="MF_00008"/>
    </source>
</evidence>
<proteinExistence type="inferred from homology"/>
<protein>
    <recommendedName>
        <fullName evidence="1">Thymidylate synthase</fullName>
        <shortName evidence="1">TS</shortName>
        <shortName evidence="1">TSase</shortName>
        <ecNumber evidence="1">2.1.1.45</ecNumber>
    </recommendedName>
</protein>
<comment type="function">
    <text evidence="1">Catalyzes the reductive methylation of 2'-deoxyuridine-5'-monophosphate (dUMP) to 2'-deoxythymidine-5'-monophosphate (dTMP) while utilizing 5,10-methylenetetrahydrofolate (mTHF) as the methyl donor and reductant in the reaction, yielding dihydrofolate (DHF) as a by-product. This enzymatic reaction provides an intracellular de novo source of dTMP, an essential precursor for DNA biosynthesis.</text>
</comment>
<comment type="catalytic activity">
    <reaction evidence="1">
        <text>dUMP + (6R)-5,10-methylene-5,6,7,8-tetrahydrofolate = 7,8-dihydrofolate + dTMP</text>
        <dbReference type="Rhea" id="RHEA:12104"/>
        <dbReference type="ChEBI" id="CHEBI:15636"/>
        <dbReference type="ChEBI" id="CHEBI:57451"/>
        <dbReference type="ChEBI" id="CHEBI:63528"/>
        <dbReference type="ChEBI" id="CHEBI:246422"/>
        <dbReference type="EC" id="2.1.1.45"/>
    </reaction>
</comment>
<comment type="pathway">
    <text evidence="1">Pyrimidine metabolism; dTTP biosynthesis.</text>
</comment>
<comment type="subunit">
    <text evidence="1">Homodimer.</text>
</comment>
<comment type="subcellular location">
    <subcellularLocation>
        <location evidence="1">Cytoplasm</location>
    </subcellularLocation>
</comment>
<comment type="similarity">
    <text evidence="1">Belongs to the thymidylate synthase family. Bacterial-type ThyA subfamily.</text>
</comment>
<gene>
    <name evidence="1" type="primary">thyA</name>
    <name type="ordered locus">ECA0988</name>
</gene>
<organism>
    <name type="scientific">Pectobacterium atrosepticum (strain SCRI 1043 / ATCC BAA-672)</name>
    <name type="common">Erwinia carotovora subsp. atroseptica</name>
    <dbReference type="NCBI Taxonomy" id="218491"/>
    <lineage>
        <taxon>Bacteria</taxon>
        <taxon>Pseudomonadati</taxon>
        <taxon>Pseudomonadota</taxon>
        <taxon>Gammaproteobacteria</taxon>
        <taxon>Enterobacterales</taxon>
        <taxon>Pectobacteriaceae</taxon>
        <taxon>Pectobacterium</taxon>
    </lineage>
</organism>
<name>TYSY_PECAS</name>